<accession>A3CP46</accession>
<keyword id="KW-0963">Cytoplasm</keyword>
<keyword id="KW-0255">Endonuclease</keyword>
<keyword id="KW-0378">Hydrolase</keyword>
<keyword id="KW-0460">Magnesium</keyword>
<keyword id="KW-0479">Metal-binding</keyword>
<keyword id="KW-0507">mRNA processing</keyword>
<keyword id="KW-0540">Nuclease</keyword>
<keyword id="KW-1185">Reference proteome</keyword>
<keyword id="KW-0694">RNA-binding</keyword>
<keyword id="KW-0698">rRNA processing</keyword>
<keyword id="KW-0699">rRNA-binding</keyword>
<keyword id="KW-0819">tRNA processing</keyword>
<comment type="function">
    <text evidence="1">Digests double-stranded RNA. Involved in the processing of primary rRNA transcript to yield the immediate precursors to the large and small rRNAs (23S and 16S). Processes some mRNAs, and tRNAs when they are encoded in the rRNA operon. Processes pre-crRNA and tracrRNA of type II CRISPR loci if present in the organism.</text>
</comment>
<comment type="catalytic activity">
    <reaction evidence="1">
        <text>Endonucleolytic cleavage to 5'-phosphomonoester.</text>
        <dbReference type="EC" id="3.1.26.3"/>
    </reaction>
</comment>
<comment type="cofactor">
    <cofactor evidence="1">
        <name>Mg(2+)</name>
        <dbReference type="ChEBI" id="CHEBI:18420"/>
    </cofactor>
</comment>
<comment type="subunit">
    <text evidence="1">Homodimer.</text>
</comment>
<comment type="subcellular location">
    <subcellularLocation>
        <location evidence="1">Cytoplasm</location>
    </subcellularLocation>
</comment>
<comment type="similarity">
    <text evidence="1">Belongs to the ribonuclease III family.</text>
</comment>
<protein>
    <recommendedName>
        <fullName evidence="1">Ribonuclease 3</fullName>
        <ecNumber evidence="1">3.1.26.3</ecNumber>
    </recommendedName>
    <alternativeName>
        <fullName evidence="1">Ribonuclease III</fullName>
        <shortName evidence="1">RNase III</shortName>
    </alternativeName>
</protein>
<gene>
    <name evidence="1" type="primary">rnc</name>
    <name type="ordered locus">SSA_1561</name>
</gene>
<proteinExistence type="inferred from homology"/>
<name>RNC_STRSV</name>
<organism>
    <name type="scientific">Streptococcus sanguinis (strain SK36)</name>
    <dbReference type="NCBI Taxonomy" id="388919"/>
    <lineage>
        <taxon>Bacteria</taxon>
        <taxon>Bacillati</taxon>
        <taxon>Bacillota</taxon>
        <taxon>Bacilli</taxon>
        <taxon>Lactobacillales</taxon>
        <taxon>Streptococcaceae</taxon>
        <taxon>Streptococcus</taxon>
    </lineage>
</organism>
<sequence length="232" mass="26166">MENLKKALLEQFDLVFSDETLLETAFTHTSYANEHRLLKISHNERLEFLGDAVLQLIISEYLYTKYPKRPEGDLSKLRSMIVREESLAGFARDCQFDQFIKLGRGEEKSGGRNRDTILGDLFEAFLGALLLDKGVEAVKSFLYQVMIPKVEAGDFERVTDYKTKLQELLQINGDVEIAYQVVSETGPAHAKNFEVAVLINGRKSGQGQGRSKKLAEQEAAKNAFEKESSSCF</sequence>
<dbReference type="EC" id="3.1.26.3" evidence="1"/>
<dbReference type="EMBL" id="CP000387">
    <property type="protein sequence ID" value="ABN44951.1"/>
    <property type="molecule type" value="Genomic_DNA"/>
</dbReference>
<dbReference type="RefSeq" id="WP_002903151.1">
    <property type="nucleotide sequence ID" value="NC_009009.1"/>
</dbReference>
<dbReference type="RefSeq" id="YP_001035501.1">
    <property type="nucleotide sequence ID" value="NC_009009.1"/>
</dbReference>
<dbReference type="SMR" id="A3CP46"/>
<dbReference type="STRING" id="388919.SSA_1561"/>
<dbReference type="KEGG" id="ssa:SSA_1561"/>
<dbReference type="PATRIC" id="fig|388919.9.peg.1481"/>
<dbReference type="eggNOG" id="COG0571">
    <property type="taxonomic scope" value="Bacteria"/>
</dbReference>
<dbReference type="HOGENOM" id="CLU_000907_1_3_9"/>
<dbReference type="OrthoDB" id="9805026at2"/>
<dbReference type="Proteomes" id="UP000002148">
    <property type="component" value="Chromosome"/>
</dbReference>
<dbReference type="GO" id="GO:0005737">
    <property type="term" value="C:cytoplasm"/>
    <property type="evidence" value="ECO:0007669"/>
    <property type="project" value="UniProtKB-SubCell"/>
</dbReference>
<dbReference type="GO" id="GO:0003725">
    <property type="term" value="F:double-stranded RNA binding"/>
    <property type="evidence" value="ECO:0007669"/>
    <property type="project" value="TreeGrafter"/>
</dbReference>
<dbReference type="GO" id="GO:0046872">
    <property type="term" value="F:metal ion binding"/>
    <property type="evidence" value="ECO:0007669"/>
    <property type="project" value="UniProtKB-KW"/>
</dbReference>
<dbReference type="GO" id="GO:0004525">
    <property type="term" value="F:ribonuclease III activity"/>
    <property type="evidence" value="ECO:0007669"/>
    <property type="project" value="UniProtKB-UniRule"/>
</dbReference>
<dbReference type="GO" id="GO:0019843">
    <property type="term" value="F:rRNA binding"/>
    <property type="evidence" value="ECO:0007669"/>
    <property type="project" value="UniProtKB-KW"/>
</dbReference>
<dbReference type="GO" id="GO:0006397">
    <property type="term" value="P:mRNA processing"/>
    <property type="evidence" value="ECO:0007669"/>
    <property type="project" value="UniProtKB-UniRule"/>
</dbReference>
<dbReference type="GO" id="GO:0010468">
    <property type="term" value="P:regulation of gene expression"/>
    <property type="evidence" value="ECO:0007669"/>
    <property type="project" value="TreeGrafter"/>
</dbReference>
<dbReference type="GO" id="GO:0006364">
    <property type="term" value="P:rRNA processing"/>
    <property type="evidence" value="ECO:0007669"/>
    <property type="project" value="UniProtKB-UniRule"/>
</dbReference>
<dbReference type="GO" id="GO:0008033">
    <property type="term" value="P:tRNA processing"/>
    <property type="evidence" value="ECO:0007669"/>
    <property type="project" value="UniProtKB-KW"/>
</dbReference>
<dbReference type="CDD" id="cd10845">
    <property type="entry name" value="DSRM_RNAse_III_family"/>
    <property type="match status" value="1"/>
</dbReference>
<dbReference type="CDD" id="cd00593">
    <property type="entry name" value="RIBOc"/>
    <property type="match status" value="1"/>
</dbReference>
<dbReference type="FunFam" id="1.10.1520.10:FF:000001">
    <property type="entry name" value="Ribonuclease 3"/>
    <property type="match status" value="1"/>
</dbReference>
<dbReference type="FunFam" id="3.30.160.20:FF:000003">
    <property type="entry name" value="Ribonuclease 3"/>
    <property type="match status" value="1"/>
</dbReference>
<dbReference type="Gene3D" id="3.30.160.20">
    <property type="match status" value="1"/>
</dbReference>
<dbReference type="Gene3D" id="1.10.1520.10">
    <property type="entry name" value="Ribonuclease III domain"/>
    <property type="match status" value="1"/>
</dbReference>
<dbReference type="HAMAP" id="MF_00104">
    <property type="entry name" value="RNase_III"/>
    <property type="match status" value="1"/>
</dbReference>
<dbReference type="InterPro" id="IPR014720">
    <property type="entry name" value="dsRBD_dom"/>
</dbReference>
<dbReference type="InterPro" id="IPR011907">
    <property type="entry name" value="RNase_III"/>
</dbReference>
<dbReference type="InterPro" id="IPR000999">
    <property type="entry name" value="RNase_III_dom"/>
</dbReference>
<dbReference type="InterPro" id="IPR036389">
    <property type="entry name" value="RNase_III_sf"/>
</dbReference>
<dbReference type="NCBIfam" id="TIGR02191">
    <property type="entry name" value="RNaseIII"/>
    <property type="match status" value="1"/>
</dbReference>
<dbReference type="PANTHER" id="PTHR11207:SF0">
    <property type="entry name" value="RIBONUCLEASE 3"/>
    <property type="match status" value="1"/>
</dbReference>
<dbReference type="PANTHER" id="PTHR11207">
    <property type="entry name" value="RIBONUCLEASE III"/>
    <property type="match status" value="1"/>
</dbReference>
<dbReference type="Pfam" id="PF00035">
    <property type="entry name" value="dsrm"/>
    <property type="match status" value="1"/>
</dbReference>
<dbReference type="Pfam" id="PF14622">
    <property type="entry name" value="Ribonucleas_3_3"/>
    <property type="match status" value="1"/>
</dbReference>
<dbReference type="SMART" id="SM00358">
    <property type="entry name" value="DSRM"/>
    <property type="match status" value="1"/>
</dbReference>
<dbReference type="SMART" id="SM00535">
    <property type="entry name" value="RIBOc"/>
    <property type="match status" value="1"/>
</dbReference>
<dbReference type="SUPFAM" id="SSF54768">
    <property type="entry name" value="dsRNA-binding domain-like"/>
    <property type="match status" value="1"/>
</dbReference>
<dbReference type="SUPFAM" id="SSF69065">
    <property type="entry name" value="RNase III domain-like"/>
    <property type="match status" value="1"/>
</dbReference>
<dbReference type="PROSITE" id="PS50137">
    <property type="entry name" value="DS_RBD"/>
    <property type="match status" value="1"/>
</dbReference>
<dbReference type="PROSITE" id="PS00517">
    <property type="entry name" value="RNASE_3_1"/>
    <property type="match status" value="1"/>
</dbReference>
<dbReference type="PROSITE" id="PS50142">
    <property type="entry name" value="RNASE_3_2"/>
    <property type="match status" value="1"/>
</dbReference>
<evidence type="ECO:0000255" key="1">
    <source>
        <dbReference type="HAMAP-Rule" id="MF_00104"/>
    </source>
</evidence>
<evidence type="ECO:0000256" key="2">
    <source>
        <dbReference type="SAM" id="MobiDB-lite"/>
    </source>
</evidence>
<feature type="chain" id="PRO_1000075840" description="Ribonuclease 3">
    <location>
        <begin position="1"/>
        <end position="232"/>
    </location>
</feature>
<feature type="domain" description="RNase III" evidence="1">
    <location>
        <begin position="5"/>
        <end position="134"/>
    </location>
</feature>
<feature type="domain" description="DRBM" evidence="1">
    <location>
        <begin position="160"/>
        <end position="229"/>
    </location>
</feature>
<feature type="region of interest" description="Disordered" evidence="2">
    <location>
        <begin position="203"/>
        <end position="232"/>
    </location>
</feature>
<feature type="compositionally biased region" description="Basic and acidic residues" evidence="2">
    <location>
        <begin position="213"/>
        <end position="232"/>
    </location>
</feature>
<feature type="active site" evidence="1">
    <location>
        <position position="51"/>
    </location>
</feature>
<feature type="active site" evidence="1">
    <location>
        <position position="123"/>
    </location>
</feature>
<feature type="binding site" evidence="1">
    <location>
        <position position="47"/>
    </location>
    <ligand>
        <name>Mg(2+)</name>
        <dbReference type="ChEBI" id="CHEBI:18420"/>
    </ligand>
</feature>
<feature type="binding site" evidence="1">
    <location>
        <position position="120"/>
    </location>
    <ligand>
        <name>Mg(2+)</name>
        <dbReference type="ChEBI" id="CHEBI:18420"/>
    </ligand>
</feature>
<feature type="binding site" evidence="1">
    <location>
        <position position="123"/>
    </location>
    <ligand>
        <name>Mg(2+)</name>
        <dbReference type="ChEBI" id="CHEBI:18420"/>
    </ligand>
</feature>
<reference key="1">
    <citation type="journal article" date="2007" name="J. Bacteriol.">
        <title>Genome of the opportunistic pathogen Streptococcus sanguinis.</title>
        <authorList>
            <person name="Xu P."/>
            <person name="Alves J.M."/>
            <person name="Kitten T."/>
            <person name="Brown A."/>
            <person name="Chen Z."/>
            <person name="Ozaki L.S."/>
            <person name="Manque P."/>
            <person name="Ge X."/>
            <person name="Serrano M.G."/>
            <person name="Puiu D."/>
            <person name="Hendricks S."/>
            <person name="Wang Y."/>
            <person name="Chaplin M.D."/>
            <person name="Akan D."/>
            <person name="Paik S."/>
            <person name="Peterson D.L."/>
            <person name="Macrina F.L."/>
            <person name="Buck G.A."/>
        </authorList>
    </citation>
    <scope>NUCLEOTIDE SEQUENCE [LARGE SCALE GENOMIC DNA]</scope>
    <source>
        <strain>SK36</strain>
    </source>
</reference>